<gene>
    <name evidence="4" type="primary">chyA</name>
    <name type="ORF">Pc21g12630</name>
</gene>
<feature type="chain" id="PRO_0000443345" description="Nonribosomal peptide synthetase chyA">
    <location>
        <begin position="1"/>
        <end position="2382"/>
    </location>
</feature>
<feature type="domain" description="Carrier 1" evidence="2">
    <location>
        <begin position="745"/>
        <end position="821"/>
    </location>
</feature>
<feature type="domain" description="Carrier 2" evidence="2">
    <location>
        <begin position="1833"/>
        <end position="1909"/>
    </location>
</feature>
<feature type="region of interest" description="Adenylation 1" evidence="1">
    <location>
        <begin position="204"/>
        <end position="607"/>
    </location>
</feature>
<feature type="region of interest" description="Condensation 1" evidence="1">
    <location>
        <begin position="857"/>
        <end position="1269"/>
    </location>
</feature>
<feature type="region of interest" description="Adenylation 2" evidence="1">
    <location>
        <begin position="1294"/>
        <end position="1687"/>
    </location>
</feature>
<feature type="region of interest" description="Condensation 2" evidence="1">
    <location>
        <begin position="1967"/>
        <end position="2373"/>
    </location>
</feature>
<feature type="modified residue" description="O-(pantetheine 4'-phosphoryl)serine" evidence="2">
    <location>
        <position position="782"/>
    </location>
</feature>
<feature type="modified residue" description="O-(pantetheine 4'-phosphoryl)serine" evidence="2">
    <location>
        <position position="1870"/>
    </location>
</feature>
<keyword id="KW-0436">Ligase</keyword>
<keyword id="KW-0596">Phosphopantetheine</keyword>
<keyword id="KW-0597">Phosphoprotein</keyword>
<keyword id="KW-1185">Reference proteome</keyword>
<keyword id="KW-0677">Repeat</keyword>
<keyword id="KW-0808">Transferase</keyword>
<dbReference type="EC" id="2.3.2.-" evidence="3"/>
<dbReference type="EMBL" id="AM920436">
    <property type="protein sequence ID" value="CAP96160.1"/>
    <property type="molecule type" value="Genomic_DNA"/>
</dbReference>
<dbReference type="RefSeq" id="XP_002568290.1">
    <property type="nucleotide sequence ID" value="XM_002568244.1"/>
</dbReference>
<dbReference type="SMR" id="B6HLP9"/>
<dbReference type="STRING" id="500485.B6HLP9"/>
<dbReference type="VEuPathDB" id="FungiDB:PCH_Pc21g12630"/>
<dbReference type="eggNOG" id="KOG1176">
    <property type="taxonomic scope" value="Eukaryota"/>
</dbReference>
<dbReference type="eggNOG" id="KOG1178">
    <property type="taxonomic scope" value="Eukaryota"/>
</dbReference>
<dbReference type="HOGENOM" id="CLU_000022_60_2_1"/>
<dbReference type="OMA" id="FQIAPEM"/>
<dbReference type="OrthoDB" id="416786at2759"/>
<dbReference type="BioCyc" id="PCHR:PC21G12630-MONOMER"/>
<dbReference type="Proteomes" id="UP000000724">
    <property type="component" value="Contig Pc00c21"/>
</dbReference>
<dbReference type="GO" id="GO:0005737">
    <property type="term" value="C:cytoplasm"/>
    <property type="evidence" value="ECO:0007669"/>
    <property type="project" value="TreeGrafter"/>
</dbReference>
<dbReference type="GO" id="GO:0016874">
    <property type="term" value="F:ligase activity"/>
    <property type="evidence" value="ECO:0007669"/>
    <property type="project" value="UniProtKB-KW"/>
</dbReference>
<dbReference type="GO" id="GO:0031177">
    <property type="term" value="F:phosphopantetheine binding"/>
    <property type="evidence" value="ECO:0007669"/>
    <property type="project" value="TreeGrafter"/>
</dbReference>
<dbReference type="GO" id="GO:0016740">
    <property type="term" value="F:transferase activity"/>
    <property type="evidence" value="ECO:0007669"/>
    <property type="project" value="UniProtKB-KW"/>
</dbReference>
<dbReference type="GO" id="GO:0043041">
    <property type="term" value="P:amino acid activation for nonribosomal peptide biosynthetic process"/>
    <property type="evidence" value="ECO:0007669"/>
    <property type="project" value="TreeGrafter"/>
</dbReference>
<dbReference type="GO" id="GO:0044550">
    <property type="term" value="P:secondary metabolite biosynthetic process"/>
    <property type="evidence" value="ECO:0007669"/>
    <property type="project" value="TreeGrafter"/>
</dbReference>
<dbReference type="CDD" id="cd05918">
    <property type="entry name" value="A_NRPS_SidN3_like"/>
    <property type="match status" value="2"/>
</dbReference>
<dbReference type="CDD" id="cd19542">
    <property type="entry name" value="CT_NRPS-like"/>
    <property type="match status" value="1"/>
</dbReference>
<dbReference type="CDD" id="cd19545">
    <property type="entry name" value="FUM14_C_NRPS-like"/>
    <property type="match status" value="1"/>
</dbReference>
<dbReference type="FunFam" id="3.30.300.30:FF:000015">
    <property type="entry name" value="Nonribosomal peptide synthase SidD"/>
    <property type="match status" value="2"/>
</dbReference>
<dbReference type="FunFam" id="3.30.559.30:FF:000003">
    <property type="entry name" value="Nonribosomal peptide synthase SidD"/>
    <property type="match status" value="1"/>
</dbReference>
<dbReference type="FunFam" id="3.40.50.12780:FF:000014">
    <property type="entry name" value="Nonribosomal peptide synthetase 1"/>
    <property type="match status" value="1"/>
</dbReference>
<dbReference type="Gene3D" id="3.30.300.30">
    <property type="match status" value="2"/>
</dbReference>
<dbReference type="Gene3D" id="1.10.1200.10">
    <property type="entry name" value="ACP-like"/>
    <property type="match status" value="2"/>
</dbReference>
<dbReference type="Gene3D" id="3.30.559.10">
    <property type="entry name" value="Chloramphenicol acetyltransferase-like domain"/>
    <property type="match status" value="2"/>
</dbReference>
<dbReference type="Gene3D" id="3.40.50.12780">
    <property type="entry name" value="N-terminal domain of ligase-like"/>
    <property type="match status" value="2"/>
</dbReference>
<dbReference type="Gene3D" id="3.30.559.30">
    <property type="entry name" value="Nonribosomal peptide synthetase, condensation domain"/>
    <property type="match status" value="2"/>
</dbReference>
<dbReference type="InterPro" id="IPR010071">
    <property type="entry name" value="AA_adenyl_dom"/>
</dbReference>
<dbReference type="InterPro" id="IPR036736">
    <property type="entry name" value="ACP-like_sf"/>
</dbReference>
<dbReference type="InterPro" id="IPR045851">
    <property type="entry name" value="AMP-bd_C_sf"/>
</dbReference>
<dbReference type="InterPro" id="IPR020845">
    <property type="entry name" value="AMP-binding_CS"/>
</dbReference>
<dbReference type="InterPro" id="IPR000873">
    <property type="entry name" value="AMP-dep_synth/lig_dom"/>
</dbReference>
<dbReference type="InterPro" id="IPR042099">
    <property type="entry name" value="ANL_N_sf"/>
</dbReference>
<dbReference type="InterPro" id="IPR023213">
    <property type="entry name" value="CAT-like_dom_sf"/>
</dbReference>
<dbReference type="InterPro" id="IPR001242">
    <property type="entry name" value="Condensatn"/>
</dbReference>
<dbReference type="InterPro" id="IPR009081">
    <property type="entry name" value="PP-bd_ACP"/>
</dbReference>
<dbReference type="InterPro" id="IPR006162">
    <property type="entry name" value="Ppantetheine_attach_site"/>
</dbReference>
<dbReference type="NCBIfam" id="TIGR01733">
    <property type="entry name" value="AA-adenyl-dom"/>
    <property type="match status" value="1"/>
</dbReference>
<dbReference type="PANTHER" id="PTHR45527:SF1">
    <property type="entry name" value="FATTY ACID SYNTHASE"/>
    <property type="match status" value="1"/>
</dbReference>
<dbReference type="PANTHER" id="PTHR45527">
    <property type="entry name" value="NONRIBOSOMAL PEPTIDE SYNTHETASE"/>
    <property type="match status" value="1"/>
</dbReference>
<dbReference type="Pfam" id="PF00501">
    <property type="entry name" value="AMP-binding"/>
    <property type="match status" value="2"/>
</dbReference>
<dbReference type="Pfam" id="PF00668">
    <property type="entry name" value="Condensation"/>
    <property type="match status" value="2"/>
</dbReference>
<dbReference type="Pfam" id="PF00550">
    <property type="entry name" value="PP-binding"/>
    <property type="match status" value="2"/>
</dbReference>
<dbReference type="SUPFAM" id="SSF56801">
    <property type="entry name" value="Acetyl-CoA synthetase-like"/>
    <property type="match status" value="2"/>
</dbReference>
<dbReference type="SUPFAM" id="SSF47336">
    <property type="entry name" value="ACP-like"/>
    <property type="match status" value="2"/>
</dbReference>
<dbReference type="SUPFAM" id="SSF52777">
    <property type="entry name" value="CoA-dependent acyltransferases"/>
    <property type="match status" value="4"/>
</dbReference>
<dbReference type="PROSITE" id="PS00455">
    <property type="entry name" value="AMP_BINDING"/>
    <property type="match status" value="2"/>
</dbReference>
<dbReference type="PROSITE" id="PS50075">
    <property type="entry name" value="CARRIER"/>
    <property type="match status" value="2"/>
</dbReference>
<dbReference type="PROSITE" id="PS00012">
    <property type="entry name" value="PHOSPHOPANTETHEINE"/>
    <property type="match status" value="1"/>
</dbReference>
<evidence type="ECO:0000255" key="1"/>
<evidence type="ECO:0000255" key="2">
    <source>
        <dbReference type="PROSITE-ProRule" id="PRU00258"/>
    </source>
</evidence>
<evidence type="ECO:0000269" key="3">
    <source>
    </source>
</evidence>
<evidence type="ECO:0000303" key="4">
    <source>
    </source>
</evidence>
<evidence type="ECO:0000305" key="5"/>
<evidence type="ECO:0000305" key="6">
    <source>
    </source>
</evidence>
<accession>B6HLP9</accession>
<protein>
    <recommendedName>
        <fullName evidence="4">Nonribosomal peptide synthetase chyA</fullName>
        <shortName evidence="4">NRPS chyA</shortName>
        <ecNumber evidence="3">2.3.2.-</ecNumber>
    </recommendedName>
    <alternativeName>
        <fullName evidence="4">Chrysogine biosynthesis cluster protein A</fullName>
    </alternativeName>
</protein>
<proteinExistence type="inferred from homology"/>
<sequence length="2382" mass="260769">MAAPSISPLFAPQMGVQRDFQDSEMQIATVNFPCTGQSNTSLANWLQQEEKSHLQLLQAAWSISLRSYTGSNDVLFSCLNTKDTAALGANSVVYVDEGNEDKYGSARRGNLREFDLAICFSKQNEANCPVIGIHHKPSVISTDFATMIAATVAKAIEEIVLHVDSLIASLDICSDADINCISRWNSPSDDGIPSAQCIHHIISQKCATQPESIAVSAWDGRLTYAELDGLSSSLAIRLQHLGVCQEIFVPLIFDKSKWAVIALLSVLKAGGAYFFLNPSNPIQYNLGLCSSLSPEVALCSPRHSTLAKSFAGTAIPVGEEHCELPESLPVDEKTPPCTAETTPSNAMYITFTSGTTGVPKGITTEHSAFYSMAMANGKALQVGPATRMLQFASYTFDVSNRDMLITLMFGGCICIPSELDRLNDLSGFINRQSVNLASLTPSLASTLNPALCPSLQGLVLGGESMNDSHISAWANHVRLFNAYGVSESAGIAALASDIQADYSPGNIGFGSGSTLWVVTIDQPDKLAPIGALGEMVIEGPSVARGYLGDKKRTEEQFTSTSKWKNRIRAQLSESRSSKRAFHTGDLVRYNLDGSLNFLGRKDHQVKIHGQRLELTAIEHHIAACLEVAESGFLHVAVVTAKNEGNGSVKLLAFLGLYTSRGSDSPSQLVSKKLEDVEALKVALRQHLLLCLPAFMVPVDFIFVQHMPLTTSGKINRLLLQEAAGHALLDDQKRNIDTSDLNGNQTPTTQNQRILIQSWAKALGIKSESIMRNDCFFRRGGDSIAAIKMAASLRQQELIISVSDVFKFSTFSDMASVLVKDHRPLQTAMLAPFSLIDNSQTVLDAVMEELGTGIDQIEDVYPCTHMQQGLIALTAQQPHSYIGRYTWQLAEMLDVEKFKNAWESAWLHNPILRTRIVQIPDGVFQVVVKTDMPWNTVTDISRGGDGKELREIDISNGPLIQFYLSKESFRLDIHHSLFDEWSLGLIMGQVERAYAGGGLRMQPFSPFVQHLLHERDTSLEDFWRQEFSGLQAEHFPAIASRPLSVEHPTEKVVLEHSVQLETGFSTKYTISSIVRLAWAIVLWHQTGSEDVVFGATVSGRNANIDGIDQLSGPTLATLPVRIKLAASQPIHEGLSQVQGQFVNMMVHEQAGLPRIRQVGREAAEACNFQNLLVVQPYEEQTESHMFKASANSASSSENAKSFASYPMVLICRPEKSGISMKAAFDPAILTPAAGHSILKQMSHVIQQLVTSDSTCIAAVSLVPPEDMATLRQWNHSLPNGVNTCIHARIQELCIGQPDTLAIHSQNLDLTYGQLDNYSDQFAQNLIGSGVKQGDFVPLFLERSPWVPVIMLAVLKTGAAFVLLDLSHPMQRLRTMCSMIDARIVVTSKEHADRSGNLLLPVIIFDPEAHAQNVSKQATAPELKPLTAVTTPDAPACVVFSSGSTGLPKGIVLPHSALTTSAAVMREYGMLGPKSRVFHFASFAFDISIGEILFTLAAGACVCVPHEEERKGNPAKAAGDLKVTWALLTPSVINLFDPSDVPTLEVLGSAGEPLTPQIVDTWAHRVKLYGMYAPAECTVISHIGRILPDTHHSNIGKSHGGVSWVVDPSDHNRLVPIGTVGELIVEGPTVSSGYLNDPAKTNEVFITSPSWLDEVRSHSGKMYKTGDLVRQTSEGSLEFVGRKDDQVKLHGQRLEVGEVEHCITSSCTAIKTATVECIKIREQNSRVSLVAFICPQTDEDWGQSLNDPSSEVGDLELISPPRDQFYSMIESLETSLRELLPAYMVPSFFVPLADVPLSLSGKVNRRLLRDQSTSWPMKRLGLYQLRRKSIPAEEVPVSIHGRKVQEIVGQALNLDPKSIPMNSNFFGLGGDSISAMQVSMLARRRGIRLTVADIFTQQTLSGLSLKCATENGDASQASKSRSLGRELPGSNIKSLHRCEIPRDKLPRQLPQEIADNIVEAMPATEFQTMTLHNFYSRYLWISLPERVNQEHLLNACDQLVQKHSVLRTVFYTNDDKSVVQLTLRKVPVNFVHYSNIENLEKHCADDSLAMGVPINSVPGFEVQLVTLRDSGMYLILRLPHAQFDGVSLDIICSDLSAAYSGDSLPPCAQFSDHIRHVWEKRIPESYNAWREVLGNVPMTSLNNKYLRNWGSASEMGSPNMGTDPDQPKVVTAMAETLPISPPPNITLATLVKLAWAITLSRLFTSIEEDDGASDDVVFGQVVHGRGLGISHEDRIVGPCLNIIPVRVHLPPRSNKLDLLGQVQQQHIQTMSVENLELGEITRNCTSWKAGTKFGSFIRFQNFTNNDDSTCSFDGSACETGLYSLPNRPSNTANVLVVPHGPTLSITMTISNQVLDRGSADFVAGYFSDVIESLASEETVCEYLE</sequence>
<organism>
    <name type="scientific">Penicillium rubens (strain ATCC 28089 / DSM 1075 / NRRL 1951 / Wisconsin 54-1255)</name>
    <name type="common">Penicillium chrysogenum</name>
    <dbReference type="NCBI Taxonomy" id="500485"/>
    <lineage>
        <taxon>Eukaryota</taxon>
        <taxon>Fungi</taxon>
        <taxon>Dikarya</taxon>
        <taxon>Ascomycota</taxon>
        <taxon>Pezizomycotina</taxon>
        <taxon>Eurotiomycetes</taxon>
        <taxon>Eurotiomycetidae</taxon>
        <taxon>Eurotiales</taxon>
        <taxon>Aspergillaceae</taxon>
        <taxon>Penicillium</taxon>
        <taxon>Penicillium chrysogenum species complex</taxon>
    </lineage>
</organism>
<comment type="function">
    <text evidence="3">Nonribosomal peptide synthetase; part of the gene cluster that mediates the biosynthesis of the yellow pigment chrysogine (PubMed:29196288). the NRPS chyA mediates the condensation of anthranilic acid and alanine into the intermediate 2-(2-aminopropanamido)benzoic acid (PubMed:29196288). The remainder of the pathway is highly branched yielding at least 13 chrysogine-related compounds (PubMed:29196288). The malonyl transferase chyE converts 2-(2-aminopropanamido)benzoic acid and 2-(2-aminopropanamido)benzamidine into 2-(2-(2-carboxyacetamido)propanamido)benzoic acid and 3-((1-((2-carbamoylphenyl)amino)-1-oxopropan-2-yl)amino)-3-oxopropanoic acid, respectively (PubMed:29196288). ChyD is an amidase, being responsible for the amidation of the carboxylic acid moiety of 2-(2-aminopropanamido)benzoic acid, 2-(2-(2-carboxyacetamido)propanamido)benzoic acid and 2-(2-((4-amino-1-carboxy-4-oxobutyl)amino)propanamido)benzoic acid (PubMed:29196288). ChyC is involved in the same reactions as ChyD, but plays a more minor role in the amidation reactions compared to chyD (PubMed:29196288). The oxidoreductases chyH and chyM are involved in oxidation reactions that form N-pyruvoylanthranilamide from 2-(2-aminopropanamido)benzamidine and (1-((2-carbamoylphenyl)amino)-1-oxopropan-2-yl)glutamine, respectively (PubMed:29196288). N-pyruvoylanthranilamide is further converted via two further branches in the pathway, yielding chrysogine and additional chrysogine-related coumpounds (PubMed:29196288). Chrysogine is likely formed by a spontaneous ring closure from N-pyruvoylanthranilamide (PubMed:29196288).</text>
</comment>
<comment type="pathway">
    <text evidence="3">Pigment biosynthesis.</text>
</comment>
<comment type="domain">
    <text evidence="6">NRP synthetases are composed of discrete domains (adenylation (A), thiolation (T) or peptidyl carrier protein (PCP) and condensation (C) domains) which when grouped together are referred to as a single module. Each module is responsible for the recognition (via the A domain) and incorporation of a single amino acid into the growing peptide product. Thus, an NRP synthetase is generally composed of one or more modules and can terminate in a thioesterase domain (TE) that releases the newly synthesized peptide from the enzyme. Occasionally, epimerase (E) domains (responsible for L- to D-amino acid conversion) are present within the NRP synthetase. ChyA has the following architecture: A-T-C-A-T-C.</text>
</comment>
<comment type="disruption phenotype">
    <text evidence="3">Impairs the production of chrysogine and 13 other chrysogine-related compounds (PubMed:29196288).</text>
</comment>
<comment type="similarity">
    <text evidence="5">Belongs to the NRP synthetase family.</text>
</comment>
<reference key="1">
    <citation type="journal article" date="2008" name="Nat. Biotechnol.">
        <title>Genome sequencing and analysis of the filamentous fungus Penicillium chrysogenum.</title>
        <authorList>
            <person name="van den Berg M.A."/>
            <person name="Albang R."/>
            <person name="Albermann K."/>
            <person name="Badger J.H."/>
            <person name="Daran J.-M."/>
            <person name="Driessen A.J.M."/>
            <person name="Garcia-Estrada C."/>
            <person name="Fedorova N.D."/>
            <person name="Harris D.M."/>
            <person name="Heijne W.H.M."/>
            <person name="Joardar V.S."/>
            <person name="Kiel J.A.K.W."/>
            <person name="Kovalchuk A."/>
            <person name="Martin J.F."/>
            <person name="Nierman W.C."/>
            <person name="Nijland J.G."/>
            <person name="Pronk J.T."/>
            <person name="Roubos J.A."/>
            <person name="van der Klei I.J."/>
            <person name="van Peij N.N.M.E."/>
            <person name="Veenhuis M."/>
            <person name="von Doehren H."/>
            <person name="Wagner C."/>
            <person name="Wortman J.R."/>
            <person name="Bovenberg R.A.L."/>
        </authorList>
    </citation>
    <scope>NUCLEOTIDE SEQUENCE [LARGE SCALE GENOMIC DNA]</scope>
    <source>
        <strain>ATCC 28089 / DSM 1075 / NRRL 1951 / Wisconsin 54-1255</strain>
    </source>
</reference>
<reference key="2">
    <citation type="journal article" date="2017" name="Appl. Environ. Microbiol.">
        <title>Elucidation of the biosynthetic pathway for the production of the pigment chrysogine by Penicillium chrysogenum.</title>
        <authorList>
            <person name="Viggiano A."/>
            <person name="Salo O."/>
            <person name="Ali H."/>
            <person name="Szymanski W."/>
            <person name="Lankhorst P.P."/>
            <person name="Nygaard Y."/>
            <person name="Bovenberg R.A.L."/>
            <person name="Driessen A.J.M."/>
        </authorList>
    </citation>
    <scope>FUNCTION</scope>
    <scope>DOMAIN</scope>
    <scope>DISRUPTION PHENOTYPE</scope>
</reference>
<name>CHYA_PENRW</name>